<sequence>MNEDNSQNSEGPSRKSFFERLSQLFQGEPKDRQELVDVIRDSEVNDLIDHDTRDMLEGVMEIAEMRVRDIMIPRSQMVTIDRTHNLDALVAIMTDAQHSRYPVISEDKDHVEGILLAKDLLKYLGSNCAPFNIQEVIRPAVVVPESKRVDRLLKEFREERYHMAIVVDEFGGVSGLVTIEDILEEIVGDIEDEFDDEEQKDIRQLSKHTFSVKALTTIEDFNHTFGTKFSDEEVDTVGGLVMTAFGHLPARGEVVDIAGYNFKVTAADSRRVVALQVTVPDLEALSHVAEE</sequence>
<reference key="1">
    <citation type="journal article" date="2000" name="Nature">
        <title>DNA sequence of both chromosomes of the cholera pathogen Vibrio cholerae.</title>
        <authorList>
            <person name="Heidelberg J.F."/>
            <person name="Eisen J.A."/>
            <person name="Nelson W.C."/>
            <person name="Clayton R.A."/>
            <person name="Gwinn M.L."/>
            <person name="Dodson R.J."/>
            <person name="Haft D.H."/>
            <person name="Hickey E.K."/>
            <person name="Peterson J.D."/>
            <person name="Umayam L.A."/>
            <person name="Gill S.R."/>
            <person name="Nelson K.E."/>
            <person name="Read T.D."/>
            <person name="Tettelin H."/>
            <person name="Richardson D.L."/>
            <person name="Ermolaeva M.D."/>
            <person name="Vamathevan J.J."/>
            <person name="Bass S."/>
            <person name="Qin H."/>
            <person name="Dragoi I."/>
            <person name="Sellers P."/>
            <person name="McDonald L.A."/>
            <person name="Utterback T.R."/>
            <person name="Fleischmann R.D."/>
            <person name="Nierman W.C."/>
            <person name="White O."/>
            <person name="Salzberg S.L."/>
            <person name="Smith H.O."/>
            <person name="Colwell R.R."/>
            <person name="Mekalanos J.J."/>
            <person name="Venter J.C."/>
            <person name="Fraser C.M."/>
        </authorList>
    </citation>
    <scope>NUCLEOTIDE SEQUENCE [LARGE SCALE GENOMIC DNA]</scope>
    <source>
        <strain>ATCC 39315 / El Tor Inaba N16961</strain>
    </source>
</reference>
<accession>Q9KTE3</accession>
<protein>
    <recommendedName>
        <fullName>Magnesium and cobalt efflux protein CorC</fullName>
    </recommendedName>
</protein>
<feature type="chain" id="PRO_0000088353" description="Magnesium and cobalt efflux protein CorC">
    <location>
        <begin position="1"/>
        <end position="291"/>
    </location>
</feature>
<feature type="domain" description="CBS 1" evidence="2">
    <location>
        <begin position="71"/>
        <end position="131"/>
    </location>
</feature>
<feature type="domain" description="CBS 2" evidence="2">
    <location>
        <begin position="136"/>
        <end position="193"/>
    </location>
</feature>
<organism>
    <name type="scientific">Vibrio cholerae serotype O1 (strain ATCC 39315 / El Tor Inaba N16961)</name>
    <dbReference type="NCBI Taxonomy" id="243277"/>
    <lineage>
        <taxon>Bacteria</taxon>
        <taxon>Pseudomonadati</taxon>
        <taxon>Pseudomonadota</taxon>
        <taxon>Gammaproteobacteria</taxon>
        <taxon>Vibrionales</taxon>
        <taxon>Vibrionaceae</taxon>
        <taxon>Vibrio</taxon>
    </lineage>
</organism>
<dbReference type="EMBL" id="AE003852">
    <property type="protein sequence ID" value="AAF94121.1"/>
    <property type="molecule type" value="Genomic_DNA"/>
</dbReference>
<dbReference type="PIR" id="B82261">
    <property type="entry name" value="B82261"/>
</dbReference>
<dbReference type="RefSeq" id="NP_230606.1">
    <property type="nucleotide sequence ID" value="NC_002505.1"/>
</dbReference>
<dbReference type="RefSeq" id="WP_001001301.1">
    <property type="nucleotide sequence ID" value="NZ_LT906614.1"/>
</dbReference>
<dbReference type="SMR" id="Q9KTE3"/>
<dbReference type="STRING" id="243277.VC_0959"/>
<dbReference type="DNASU" id="2614212"/>
<dbReference type="EnsemblBacteria" id="AAF94121">
    <property type="protein sequence ID" value="AAF94121"/>
    <property type="gene ID" value="VC_0959"/>
</dbReference>
<dbReference type="GeneID" id="88784631"/>
<dbReference type="KEGG" id="vch:VC_0959"/>
<dbReference type="PATRIC" id="fig|243277.26.peg.913"/>
<dbReference type="eggNOG" id="COG4535">
    <property type="taxonomic scope" value="Bacteria"/>
</dbReference>
<dbReference type="HOGENOM" id="CLU_015237_3_0_6"/>
<dbReference type="Proteomes" id="UP000000584">
    <property type="component" value="Chromosome 1"/>
</dbReference>
<dbReference type="GO" id="GO:0005886">
    <property type="term" value="C:plasma membrane"/>
    <property type="evidence" value="ECO:0000318"/>
    <property type="project" value="GO_Central"/>
</dbReference>
<dbReference type="GO" id="GO:0050660">
    <property type="term" value="F:flavin adenine dinucleotide binding"/>
    <property type="evidence" value="ECO:0007669"/>
    <property type="project" value="InterPro"/>
</dbReference>
<dbReference type="CDD" id="cd04590">
    <property type="entry name" value="CBS_pair_CorC_HlyC_assoc"/>
    <property type="match status" value="1"/>
</dbReference>
<dbReference type="FunFam" id="3.30.465.10:FF:000003">
    <property type="entry name" value="Magnesium and cobalt efflux protein corC"/>
    <property type="match status" value="1"/>
</dbReference>
<dbReference type="FunFam" id="3.10.580.10:FF:000002">
    <property type="entry name" value="Magnesium/cobalt efflux protein CorC"/>
    <property type="match status" value="1"/>
</dbReference>
<dbReference type="Gene3D" id="3.30.465.10">
    <property type="match status" value="1"/>
</dbReference>
<dbReference type="Gene3D" id="3.10.580.10">
    <property type="entry name" value="CBS-domain"/>
    <property type="match status" value="1"/>
</dbReference>
<dbReference type="InterPro" id="IPR000644">
    <property type="entry name" value="CBS_dom"/>
</dbReference>
<dbReference type="InterPro" id="IPR046342">
    <property type="entry name" value="CBS_dom_sf"/>
</dbReference>
<dbReference type="InterPro" id="IPR054115">
    <property type="entry name" value="CorC_N"/>
</dbReference>
<dbReference type="InterPro" id="IPR036318">
    <property type="entry name" value="FAD-bd_PCMH-like_sf"/>
</dbReference>
<dbReference type="InterPro" id="IPR016169">
    <property type="entry name" value="FAD-bd_PCMH_sub2"/>
</dbReference>
<dbReference type="InterPro" id="IPR044751">
    <property type="entry name" value="Ion_transp-like_CBS"/>
</dbReference>
<dbReference type="InterPro" id="IPR005170">
    <property type="entry name" value="Transptr-assoc_dom"/>
</dbReference>
<dbReference type="NCBIfam" id="NF011675">
    <property type="entry name" value="PRK15094.1"/>
    <property type="match status" value="1"/>
</dbReference>
<dbReference type="PANTHER" id="PTHR22777">
    <property type="entry name" value="HEMOLYSIN-RELATED"/>
    <property type="match status" value="1"/>
</dbReference>
<dbReference type="PANTHER" id="PTHR22777:SF27">
    <property type="entry name" value="MAGNESIUM AND COBALT EFFLUX PROTEIN CORC"/>
    <property type="match status" value="1"/>
</dbReference>
<dbReference type="Pfam" id="PF00571">
    <property type="entry name" value="CBS"/>
    <property type="match status" value="2"/>
</dbReference>
<dbReference type="Pfam" id="PF03471">
    <property type="entry name" value="CorC_HlyC"/>
    <property type="match status" value="1"/>
</dbReference>
<dbReference type="Pfam" id="PF21917">
    <property type="entry name" value="NMB0537_N"/>
    <property type="match status" value="1"/>
</dbReference>
<dbReference type="SMART" id="SM00116">
    <property type="entry name" value="CBS"/>
    <property type="match status" value="2"/>
</dbReference>
<dbReference type="SMART" id="SM01091">
    <property type="entry name" value="CorC_HlyC"/>
    <property type="match status" value="1"/>
</dbReference>
<dbReference type="SUPFAM" id="SSF54631">
    <property type="entry name" value="CBS-domain pair"/>
    <property type="match status" value="1"/>
</dbReference>
<dbReference type="SUPFAM" id="SSF56176">
    <property type="entry name" value="FAD-binding/transporter-associated domain-like"/>
    <property type="match status" value="1"/>
</dbReference>
<dbReference type="PROSITE" id="PS51371">
    <property type="entry name" value="CBS"/>
    <property type="match status" value="2"/>
</dbReference>
<name>CORC_VIBCH</name>
<proteinExistence type="inferred from homology"/>
<keyword id="KW-0129">CBS domain</keyword>
<keyword id="KW-0170">Cobalt</keyword>
<keyword id="KW-0460">Magnesium</keyword>
<keyword id="KW-1185">Reference proteome</keyword>
<keyword id="KW-0677">Repeat</keyword>
<keyword id="KW-0813">Transport</keyword>
<gene>
    <name type="primary">corC</name>
    <name type="ordered locus">VC_0959</name>
</gene>
<evidence type="ECO:0000250" key="1"/>
<evidence type="ECO:0000255" key="2">
    <source>
        <dbReference type="PROSITE-ProRule" id="PRU00703"/>
    </source>
</evidence>
<evidence type="ECO:0000305" key="3"/>
<comment type="function">
    <text evidence="1">Plays a role in the transport of magnesium and cobalt ions.</text>
</comment>
<comment type="similarity">
    <text evidence="3">Belongs to the UPF0053 family.</text>
</comment>